<comment type="function">
    <text evidence="1">Involved in the biosynthesis of the chorismate, which leads to the biosynthesis of aromatic amino acids. Catalyzes the reversible NADPH linked reduction of 3-dehydroshikimate (DHSA) to yield shikimate (SA).</text>
</comment>
<comment type="catalytic activity">
    <reaction evidence="1">
        <text>shikimate + NADP(+) = 3-dehydroshikimate + NADPH + H(+)</text>
        <dbReference type="Rhea" id="RHEA:17737"/>
        <dbReference type="ChEBI" id="CHEBI:15378"/>
        <dbReference type="ChEBI" id="CHEBI:16630"/>
        <dbReference type="ChEBI" id="CHEBI:36208"/>
        <dbReference type="ChEBI" id="CHEBI:57783"/>
        <dbReference type="ChEBI" id="CHEBI:58349"/>
        <dbReference type="EC" id="1.1.1.25"/>
    </reaction>
</comment>
<comment type="pathway">
    <text evidence="1">Metabolic intermediate biosynthesis; chorismate biosynthesis; chorismate from D-erythrose 4-phosphate and phosphoenolpyruvate: step 4/7.</text>
</comment>
<comment type="subunit">
    <text evidence="1">Homodimer.</text>
</comment>
<comment type="similarity">
    <text evidence="1">Belongs to the shikimate dehydrogenase family.</text>
</comment>
<feature type="chain" id="PRO_0000325123" description="Shikimate dehydrogenase (NADP(+))">
    <location>
        <begin position="1"/>
        <end position="273"/>
    </location>
</feature>
<feature type="active site" description="Proton acceptor" evidence="1">
    <location>
        <position position="69"/>
    </location>
</feature>
<feature type="binding site" evidence="1">
    <location>
        <begin position="18"/>
        <end position="20"/>
    </location>
    <ligand>
        <name>shikimate</name>
        <dbReference type="ChEBI" id="CHEBI:36208"/>
    </ligand>
</feature>
<feature type="binding site" evidence="1">
    <location>
        <position position="65"/>
    </location>
    <ligand>
        <name>shikimate</name>
        <dbReference type="ChEBI" id="CHEBI:36208"/>
    </ligand>
</feature>
<feature type="binding site" evidence="1">
    <location>
        <position position="81"/>
    </location>
    <ligand>
        <name>NADP(+)</name>
        <dbReference type="ChEBI" id="CHEBI:58349"/>
    </ligand>
</feature>
<feature type="binding site" evidence="1">
    <location>
        <position position="90"/>
    </location>
    <ligand>
        <name>shikimate</name>
        <dbReference type="ChEBI" id="CHEBI:36208"/>
    </ligand>
</feature>
<feature type="binding site" evidence="1">
    <location>
        <position position="105"/>
    </location>
    <ligand>
        <name>shikimate</name>
        <dbReference type="ChEBI" id="CHEBI:36208"/>
    </ligand>
</feature>
<feature type="binding site" evidence="1">
    <location>
        <begin position="130"/>
        <end position="134"/>
    </location>
    <ligand>
        <name>NADP(+)</name>
        <dbReference type="ChEBI" id="CHEBI:58349"/>
    </ligand>
</feature>
<feature type="binding site" evidence="1">
    <location>
        <begin position="154"/>
        <end position="159"/>
    </location>
    <ligand>
        <name>NADP(+)</name>
        <dbReference type="ChEBI" id="CHEBI:58349"/>
    </ligand>
</feature>
<feature type="binding site" evidence="1">
    <location>
        <position position="217"/>
    </location>
    <ligand>
        <name>NADP(+)</name>
        <dbReference type="ChEBI" id="CHEBI:58349"/>
    </ligand>
</feature>
<feature type="binding site" evidence="1">
    <location>
        <position position="219"/>
    </location>
    <ligand>
        <name>shikimate</name>
        <dbReference type="ChEBI" id="CHEBI:36208"/>
    </ligand>
</feature>
<feature type="binding site" evidence="1">
    <location>
        <position position="240"/>
    </location>
    <ligand>
        <name>NADP(+)</name>
        <dbReference type="ChEBI" id="CHEBI:58349"/>
    </ligand>
</feature>
<gene>
    <name evidence="1" type="primary">aroE</name>
    <name type="ordered locus">HEAR2753</name>
</gene>
<reference key="1">
    <citation type="journal article" date="2007" name="PLoS Genet.">
        <title>A tale of two oxidation states: bacterial colonization of arsenic-rich environments.</title>
        <authorList>
            <person name="Muller D."/>
            <person name="Medigue C."/>
            <person name="Koechler S."/>
            <person name="Barbe V."/>
            <person name="Barakat M."/>
            <person name="Talla E."/>
            <person name="Bonnefoy V."/>
            <person name="Krin E."/>
            <person name="Arsene-Ploetze F."/>
            <person name="Carapito C."/>
            <person name="Chandler M."/>
            <person name="Cournoyer B."/>
            <person name="Cruveiller S."/>
            <person name="Dossat C."/>
            <person name="Duval S."/>
            <person name="Heymann M."/>
            <person name="Leize E."/>
            <person name="Lieutaud A."/>
            <person name="Lievremont D."/>
            <person name="Makita Y."/>
            <person name="Mangenot S."/>
            <person name="Nitschke W."/>
            <person name="Ortet P."/>
            <person name="Perdrial N."/>
            <person name="Schoepp B."/>
            <person name="Siguier P."/>
            <person name="Simeonova D.D."/>
            <person name="Rouy Z."/>
            <person name="Segurens B."/>
            <person name="Turlin E."/>
            <person name="Vallenet D."/>
            <person name="van Dorsselaer A."/>
            <person name="Weiss S."/>
            <person name="Weissenbach J."/>
            <person name="Lett M.-C."/>
            <person name="Danchin A."/>
            <person name="Bertin P.N."/>
        </authorList>
    </citation>
    <scope>NUCLEOTIDE SEQUENCE [LARGE SCALE GENOMIC DNA]</scope>
    <source>
        <strain>ULPAs1</strain>
    </source>
</reference>
<sequence>MSTMTDRYAVIGNPIAHSKSPDIHARFAAQTQQDMRYEPLLAPLDGFLATVQDFVRNGGKGVNVTVPFKLEAYALATTLTERARAAGAVNTLKFDGADMLGDNTDGFGLVSDIVRNAKVEIANKSVLLLGAGGAARGVLLPLLHEQPARLVLANRTHSKALDLAHRFAAQPRLKVSTFADLDDSFDIVINATAASLASEVPPISPRVFTAHTLAYDMMYGAQPTAFMRFAAQHGATVRDGLGMLVEQAAESFYLWRGVRPETAAVFAELRAQL</sequence>
<protein>
    <recommendedName>
        <fullName evidence="1">Shikimate dehydrogenase (NADP(+))</fullName>
        <shortName evidence="1">SDH</shortName>
        <ecNumber evidence="1">1.1.1.25</ecNumber>
    </recommendedName>
</protein>
<dbReference type="EC" id="1.1.1.25" evidence="1"/>
<dbReference type="EMBL" id="CU207211">
    <property type="protein sequence ID" value="CAL62870.1"/>
    <property type="molecule type" value="Genomic_DNA"/>
</dbReference>
<dbReference type="SMR" id="A4G8N3"/>
<dbReference type="STRING" id="204773.HEAR2753"/>
<dbReference type="KEGG" id="har:HEAR2753"/>
<dbReference type="eggNOG" id="COG0169">
    <property type="taxonomic scope" value="Bacteria"/>
</dbReference>
<dbReference type="HOGENOM" id="CLU_044063_2_1_4"/>
<dbReference type="OrthoDB" id="9776868at2"/>
<dbReference type="UniPathway" id="UPA00053">
    <property type="reaction ID" value="UER00087"/>
</dbReference>
<dbReference type="Proteomes" id="UP000006697">
    <property type="component" value="Chromosome"/>
</dbReference>
<dbReference type="GO" id="GO:0005829">
    <property type="term" value="C:cytosol"/>
    <property type="evidence" value="ECO:0007669"/>
    <property type="project" value="TreeGrafter"/>
</dbReference>
<dbReference type="GO" id="GO:0050661">
    <property type="term" value="F:NADP binding"/>
    <property type="evidence" value="ECO:0007669"/>
    <property type="project" value="InterPro"/>
</dbReference>
<dbReference type="GO" id="GO:0004764">
    <property type="term" value="F:shikimate 3-dehydrogenase (NADP+) activity"/>
    <property type="evidence" value="ECO:0007669"/>
    <property type="project" value="UniProtKB-UniRule"/>
</dbReference>
<dbReference type="GO" id="GO:0008652">
    <property type="term" value="P:amino acid biosynthetic process"/>
    <property type="evidence" value="ECO:0007669"/>
    <property type="project" value="UniProtKB-KW"/>
</dbReference>
<dbReference type="GO" id="GO:0009073">
    <property type="term" value="P:aromatic amino acid family biosynthetic process"/>
    <property type="evidence" value="ECO:0007669"/>
    <property type="project" value="UniProtKB-KW"/>
</dbReference>
<dbReference type="GO" id="GO:0009423">
    <property type="term" value="P:chorismate biosynthetic process"/>
    <property type="evidence" value="ECO:0007669"/>
    <property type="project" value="UniProtKB-UniRule"/>
</dbReference>
<dbReference type="GO" id="GO:0019632">
    <property type="term" value="P:shikimate metabolic process"/>
    <property type="evidence" value="ECO:0007669"/>
    <property type="project" value="InterPro"/>
</dbReference>
<dbReference type="CDD" id="cd01065">
    <property type="entry name" value="NAD_bind_Shikimate_DH"/>
    <property type="match status" value="1"/>
</dbReference>
<dbReference type="FunFam" id="3.40.50.10860:FF:000006">
    <property type="entry name" value="Shikimate dehydrogenase (NADP(+))"/>
    <property type="match status" value="1"/>
</dbReference>
<dbReference type="Gene3D" id="3.40.50.10860">
    <property type="entry name" value="Leucine Dehydrogenase, chain A, domain 1"/>
    <property type="match status" value="1"/>
</dbReference>
<dbReference type="Gene3D" id="3.40.50.720">
    <property type="entry name" value="NAD(P)-binding Rossmann-like Domain"/>
    <property type="match status" value="1"/>
</dbReference>
<dbReference type="HAMAP" id="MF_00222">
    <property type="entry name" value="Shikimate_DH_AroE"/>
    <property type="match status" value="1"/>
</dbReference>
<dbReference type="InterPro" id="IPR046346">
    <property type="entry name" value="Aminoacid_DH-like_N_sf"/>
</dbReference>
<dbReference type="InterPro" id="IPR036291">
    <property type="entry name" value="NAD(P)-bd_dom_sf"/>
</dbReference>
<dbReference type="InterPro" id="IPR041121">
    <property type="entry name" value="SDH_C"/>
</dbReference>
<dbReference type="InterPro" id="IPR011342">
    <property type="entry name" value="Shikimate_DH"/>
</dbReference>
<dbReference type="InterPro" id="IPR013708">
    <property type="entry name" value="Shikimate_DH-bd_N"/>
</dbReference>
<dbReference type="InterPro" id="IPR022893">
    <property type="entry name" value="Shikimate_DH_fam"/>
</dbReference>
<dbReference type="InterPro" id="IPR006151">
    <property type="entry name" value="Shikm_DH/Glu-tRNA_Rdtase"/>
</dbReference>
<dbReference type="NCBIfam" id="TIGR00507">
    <property type="entry name" value="aroE"/>
    <property type="match status" value="1"/>
</dbReference>
<dbReference type="NCBIfam" id="NF001310">
    <property type="entry name" value="PRK00258.1-2"/>
    <property type="match status" value="1"/>
</dbReference>
<dbReference type="PANTHER" id="PTHR21089:SF1">
    <property type="entry name" value="BIFUNCTIONAL 3-DEHYDROQUINATE DEHYDRATASE_SHIKIMATE DEHYDROGENASE, CHLOROPLASTIC"/>
    <property type="match status" value="1"/>
</dbReference>
<dbReference type="PANTHER" id="PTHR21089">
    <property type="entry name" value="SHIKIMATE DEHYDROGENASE"/>
    <property type="match status" value="1"/>
</dbReference>
<dbReference type="Pfam" id="PF18317">
    <property type="entry name" value="SDH_C"/>
    <property type="match status" value="1"/>
</dbReference>
<dbReference type="Pfam" id="PF01488">
    <property type="entry name" value="Shikimate_DH"/>
    <property type="match status" value="1"/>
</dbReference>
<dbReference type="Pfam" id="PF08501">
    <property type="entry name" value="Shikimate_dh_N"/>
    <property type="match status" value="1"/>
</dbReference>
<dbReference type="SUPFAM" id="SSF53223">
    <property type="entry name" value="Aminoacid dehydrogenase-like, N-terminal domain"/>
    <property type="match status" value="1"/>
</dbReference>
<dbReference type="SUPFAM" id="SSF51735">
    <property type="entry name" value="NAD(P)-binding Rossmann-fold domains"/>
    <property type="match status" value="1"/>
</dbReference>
<evidence type="ECO:0000255" key="1">
    <source>
        <dbReference type="HAMAP-Rule" id="MF_00222"/>
    </source>
</evidence>
<organism>
    <name type="scientific">Herminiimonas arsenicoxydans</name>
    <dbReference type="NCBI Taxonomy" id="204773"/>
    <lineage>
        <taxon>Bacteria</taxon>
        <taxon>Pseudomonadati</taxon>
        <taxon>Pseudomonadota</taxon>
        <taxon>Betaproteobacteria</taxon>
        <taxon>Burkholderiales</taxon>
        <taxon>Oxalobacteraceae</taxon>
        <taxon>Herminiimonas</taxon>
    </lineage>
</organism>
<accession>A4G8N3</accession>
<keyword id="KW-0028">Amino-acid biosynthesis</keyword>
<keyword id="KW-0057">Aromatic amino acid biosynthesis</keyword>
<keyword id="KW-0521">NADP</keyword>
<keyword id="KW-0560">Oxidoreductase</keyword>
<keyword id="KW-1185">Reference proteome</keyword>
<name>AROE_HERAR</name>
<proteinExistence type="inferred from homology"/>